<reference key="1">
    <citation type="journal article" date="2004" name="Proc. Natl. Acad. Sci. U.S.A.">
        <title>Genome sequence of the enterobacterial phytopathogen Erwinia carotovora subsp. atroseptica and characterization of virulence factors.</title>
        <authorList>
            <person name="Bell K.S."/>
            <person name="Sebaihia M."/>
            <person name="Pritchard L."/>
            <person name="Holden M.T.G."/>
            <person name="Hyman L.J."/>
            <person name="Holeva M.C."/>
            <person name="Thomson N.R."/>
            <person name="Bentley S.D."/>
            <person name="Churcher L.J.C."/>
            <person name="Mungall K."/>
            <person name="Atkin R."/>
            <person name="Bason N."/>
            <person name="Brooks K."/>
            <person name="Chillingworth T."/>
            <person name="Clark K."/>
            <person name="Doggett J."/>
            <person name="Fraser A."/>
            <person name="Hance Z."/>
            <person name="Hauser H."/>
            <person name="Jagels K."/>
            <person name="Moule S."/>
            <person name="Norbertczak H."/>
            <person name="Ormond D."/>
            <person name="Price C."/>
            <person name="Quail M.A."/>
            <person name="Sanders M."/>
            <person name="Walker D."/>
            <person name="Whitehead S."/>
            <person name="Salmond G.P.C."/>
            <person name="Birch P.R.J."/>
            <person name="Parkhill J."/>
            <person name="Toth I.K."/>
        </authorList>
    </citation>
    <scope>NUCLEOTIDE SEQUENCE [LARGE SCALE GENOMIC DNA]</scope>
    <source>
        <strain>SCRI 1043 / ATCC BAA-672</strain>
    </source>
</reference>
<feature type="chain" id="PRO_1000132622" description="Replication restart protein PriB">
    <location>
        <begin position="1"/>
        <end position="106"/>
    </location>
</feature>
<feature type="domain" description="SSB" evidence="1">
    <location>
        <begin position="4"/>
        <end position="103"/>
    </location>
</feature>
<proteinExistence type="inferred from homology"/>
<protein>
    <recommendedName>
        <fullName evidence="1">Replication restart protein PriB</fullName>
    </recommendedName>
</protein>
<sequence length="106" mass="11504">MVTMNRLVLSGTVCKTPIRKVSPSGIPHCQFVLEHRSTQEEAGLSRQAWCRMPVIVSGLSSQAVTHSITVGTQLTVHGFISCHQGRNGLSKIVLHAEQIELIDSGD</sequence>
<organism>
    <name type="scientific">Pectobacterium atrosepticum (strain SCRI 1043 / ATCC BAA-672)</name>
    <name type="common">Erwinia carotovora subsp. atroseptica</name>
    <dbReference type="NCBI Taxonomy" id="218491"/>
    <lineage>
        <taxon>Bacteria</taxon>
        <taxon>Pseudomonadati</taxon>
        <taxon>Pseudomonadota</taxon>
        <taxon>Gammaproteobacteria</taxon>
        <taxon>Enterobacterales</taxon>
        <taxon>Pectobacteriaceae</taxon>
        <taxon>Pectobacterium</taxon>
    </lineage>
</organism>
<keyword id="KW-0235">DNA replication</keyword>
<keyword id="KW-0238">DNA-binding</keyword>
<keyword id="KW-0639">Primosome</keyword>
<keyword id="KW-1185">Reference proteome</keyword>
<name>PRIB_PECAS</name>
<gene>
    <name evidence="1" type="primary">priB</name>
    <name type="ordered locus">ECA3612</name>
</gene>
<accession>Q6D136</accession>
<evidence type="ECO:0000255" key="1">
    <source>
        <dbReference type="HAMAP-Rule" id="MF_00720"/>
    </source>
</evidence>
<dbReference type="EMBL" id="BX950851">
    <property type="protein sequence ID" value="CAG76510.1"/>
    <property type="molecule type" value="Genomic_DNA"/>
</dbReference>
<dbReference type="SMR" id="Q6D136"/>
<dbReference type="STRING" id="218491.ECA3612"/>
<dbReference type="KEGG" id="eca:ECA3612"/>
<dbReference type="eggNOG" id="COG2965">
    <property type="taxonomic scope" value="Bacteria"/>
</dbReference>
<dbReference type="HOGENOM" id="CLU_166075_0_0_6"/>
<dbReference type="OrthoDB" id="9180733at2"/>
<dbReference type="Proteomes" id="UP000007966">
    <property type="component" value="Chromosome"/>
</dbReference>
<dbReference type="GO" id="GO:1990077">
    <property type="term" value="C:primosome complex"/>
    <property type="evidence" value="ECO:0007669"/>
    <property type="project" value="UniProtKB-KW"/>
</dbReference>
<dbReference type="GO" id="GO:0003697">
    <property type="term" value="F:single-stranded DNA binding"/>
    <property type="evidence" value="ECO:0007669"/>
    <property type="project" value="UniProtKB-UniRule"/>
</dbReference>
<dbReference type="GO" id="GO:0006269">
    <property type="term" value="P:DNA replication, synthesis of primer"/>
    <property type="evidence" value="ECO:0007669"/>
    <property type="project" value="UniProtKB-KW"/>
</dbReference>
<dbReference type="Gene3D" id="2.40.50.140">
    <property type="entry name" value="Nucleic acid-binding proteins"/>
    <property type="match status" value="1"/>
</dbReference>
<dbReference type="HAMAP" id="MF_00720">
    <property type="entry name" value="PriB"/>
    <property type="match status" value="1"/>
</dbReference>
<dbReference type="InterPro" id="IPR012340">
    <property type="entry name" value="NA-bd_OB-fold"/>
</dbReference>
<dbReference type="InterPro" id="IPR000424">
    <property type="entry name" value="Primosome_PriB/ssb"/>
</dbReference>
<dbReference type="InterPro" id="IPR023646">
    <property type="entry name" value="Prisomal_replication_PriB"/>
</dbReference>
<dbReference type="NCBIfam" id="TIGR04418">
    <property type="entry name" value="PriB_gamma"/>
    <property type="match status" value="1"/>
</dbReference>
<dbReference type="Pfam" id="PF22657">
    <property type="entry name" value="SSB_1"/>
    <property type="match status" value="1"/>
</dbReference>
<dbReference type="PIRSF" id="PIRSF003135">
    <property type="entry name" value="Primosomal_n"/>
    <property type="match status" value="1"/>
</dbReference>
<dbReference type="SUPFAM" id="SSF50249">
    <property type="entry name" value="Nucleic acid-binding proteins"/>
    <property type="match status" value="1"/>
</dbReference>
<dbReference type="PROSITE" id="PS50935">
    <property type="entry name" value="SSB"/>
    <property type="match status" value="1"/>
</dbReference>
<comment type="function">
    <text evidence="1">Involved in the restart of stalled replication forks, which reloads the replicative helicase on sites other than the origin of replication; the PriA-PriB pathway is the major replication restart pathway. During primosome assembly it facilitates complex formation between PriA and DnaT on DNA; stabilizes PriA on DNA. Stimulates the DNA unwinding activity of PriA helicase.</text>
</comment>
<comment type="subunit">
    <text evidence="1">Homodimer. Interacts with PriA and DnaT. Component of the replication restart primosome. Primosome assembly occurs via a 'hand-off' mechanism. PriA binds to replication forks, subsequently PriB then DnaT bind; DnaT then displaces ssDNA to generate the helicase loading substrate.</text>
</comment>
<comment type="similarity">
    <text evidence="1">Belongs to the PriB family.</text>
</comment>